<sequence>MSGERAKRFPLALEDLKREPRKPEGRVAERQAAGDAARQRLTAAAAAPAAASPIVPERRAPHGGVFAAKPARAKQHAPAAPGAAKRAPQGGAKQGDRSAAPNVALSGALALTSERVRERMVERLRANGVADPRVLAAMSAVPRHMFVDPGLAAQAYEDAALPIGHQQTISKPSVVARMIELAAAGRALERVLEIGTGCGYQAAVLSRVARDVYSIERVKPLYERAKLNLRPLRVPNIRLHYGDGRVGLPAAAPFDAIVIAAAGLDVPRALLEQLAIGGRLVAPVGEQAGEQVLTLVERVAPAQWRESRLDRVFFVPLKSGVI</sequence>
<accession>Q3JRP1</accession>
<dbReference type="EC" id="2.1.1.77" evidence="1"/>
<dbReference type="EMBL" id="CP000124">
    <property type="protein sequence ID" value="ABA49077.1"/>
    <property type="molecule type" value="Genomic_DNA"/>
</dbReference>
<dbReference type="RefSeq" id="WP_004538228.1">
    <property type="nucleotide sequence ID" value="NC_007434.1"/>
</dbReference>
<dbReference type="SMR" id="Q3JRP1"/>
<dbReference type="EnsemblBacteria" id="ABA49077">
    <property type="protein sequence ID" value="ABA49077"/>
    <property type="gene ID" value="BURPS1710b_2367"/>
</dbReference>
<dbReference type="KEGG" id="bpm:BURPS1710b_2367"/>
<dbReference type="HOGENOM" id="CLU_055432_1_0_4"/>
<dbReference type="Proteomes" id="UP000002700">
    <property type="component" value="Chromosome I"/>
</dbReference>
<dbReference type="GO" id="GO:0005737">
    <property type="term" value="C:cytoplasm"/>
    <property type="evidence" value="ECO:0007669"/>
    <property type="project" value="UniProtKB-SubCell"/>
</dbReference>
<dbReference type="GO" id="GO:0004719">
    <property type="term" value="F:protein-L-isoaspartate (D-aspartate) O-methyltransferase activity"/>
    <property type="evidence" value="ECO:0007669"/>
    <property type="project" value="UniProtKB-UniRule"/>
</dbReference>
<dbReference type="GO" id="GO:0032259">
    <property type="term" value="P:methylation"/>
    <property type="evidence" value="ECO:0007669"/>
    <property type="project" value="UniProtKB-KW"/>
</dbReference>
<dbReference type="GO" id="GO:0036211">
    <property type="term" value="P:protein modification process"/>
    <property type="evidence" value="ECO:0007669"/>
    <property type="project" value="UniProtKB-UniRule"/>
</dbReference>
<dbReference type="GO" id="GO:0030091">
    <property type="term" value="P:protein repair"/>
    <property type="evidence" value="ECO:0007669"/>
    <property type="project" value="UniProtKB-UniRule"/>
</dbReference>
<dbReference type="CDD" id="cd02440">
    <property type="entry name" value="AdoMet_MTases"/>
    <property type="match status" value="1"/>
</dbReference>
<dbReference type="FunFam" id="3.40.50.150:FF:000010">
    <property type="entry name" value="Protein-L-isoaspartate O-methyltransferase"/>
    <property type="match status" value="1"/>
</dbReference>
<dbReference type="Gene3D" id="3.40.50.150">
    <property type="entry name" value="Vaccinia Virus protein VP39"/>
    <property type="match status" value="1"/>
</dbReference>
<dbReference type="HAMAP" id="MF_00090">
    <property type="entry name" value="PIMT"/>
    <property type="match status" value="1"/>
</dbReference>
<dbReference type="InterPro" id="IPR000682">
    <property type="entry name" value="PCMT"/>
</dbReference>
<dbReference type="InterPro" id="IPR029063">
    <property type="entry name" value="SAM-dependent_MTases_sf"/>
</dbReference>
<dbReference type="NCBIfam" id="TIGR00080">
    <property type="entry name" value="pimt"/>
    <property type="match status" value="1"/>
</dbReference>
<dbReference type="NCBIfam" id="NF001453">
    <property type="entry name" value="PRK00312.1"/>
    <property type="match status" value="1"/>
</dbReference>
<dbReference type="PANTHER" id="PTHR11579">
    <property type="entry name" value="PROTEIN-L-ISOASPARTATE O-METHYLTRANSFERASE"/>
    <property type="match status" value="1"/>
</dbReference>
<dbReference type="PANTHER" id="PTHR11579:SF0">
    <property type="entry name" value="PROTEIN-L-ISOASPARTATE(D-ASPARTATE) O-METHYLTRANSFERASE"/>
    <property type="match status" value="1"/>
</dbReference>
<dbReference type="Pfam" id="PF01135">
    <property type="entry name" value="PCMT"/>
    <property type="match status" value="1"/>
</dbReference>
<dbReference type="SUPFAM" id="SSF53335">
    <property type="entry name" value="S-adenosyl-L-methionine-dependent methyltransferases"/>
    <property type="match status" value="1"/>
</dbReference>
<dbReference type="PROSITE" id="PS01279">
    <property type="entry name" value="PCMT"/>
    <property type="match status" value="1"/>
</dbReference>
<proteinExistence type="inferred from homology"/>
<comment type="function">
    <text evidence="1">Catalyzes the methyl esterification of L-isoaspartyl residues in peptides and proteins that result from spontaneous decomposition of normal L-aspartyl and L-asparaginyl residues. It plays a role in the repair and/or degradation of damaged proteins.</text>
</comment>
<comment type="catalytic activity">
    <reaction evidence="1">
        <text>[protein]-L-isoaspartate + S-adenosyl-L-methionine = [protein]-L-isoaspartate alpha-methyl ester + S-adenosyl-L-homocysteine</text>
        <dbReference type="Rhea" id="RHEA:12705"/>
        <dbReference type="Rhea" id="RHEA-COMP:12143"/>
        <dbReference type="Rhea" id="RHEA-COMP:12144"/>
        <dbReference type="ChEBI" id="CHEBI:57856"/>
        <dbReference type="ChEBI" id="CHEBI:59789"/>
        <dbReference type="ChEBI" id="CHEBI:90596"/>
        <dbReference type="ChEBI" id="CHEBI:90598"/>
        <dbReference type="EC" id="2.1.1.77"/>
    </reaction>
</comment>
<comment type="subcellular location">
    <subcellularLocation>
        <location evidence="1">Cytoplasm</location>
    </subcellularLocation>
</comment>
<comment type="similarity">
    <text evidence="1">Belongs to the methyltransferase superfamily. L-isoaspartyl/D-aspartyl protein methyltransferase family.</text>
</comment>
<protein>
    <recommendedName>
        <fullName evidence="1">Protein-L-isoaspartate O-methyltransferase</fullName>
        <ecNumber evidence="1">2.1.1.77</ecNumber>
    </recommendedName>
    <alternativeName>
        <fullName evidence="1">L-isoaspartyl protein carboxyl methyltransferase</fullName>
    </alternativeName>
    <alternativeName>
        <fullName evidence="1">Protein L-isoaspartyl methyltransferase</fullName>
    </alternativeName>
    <alternativeName>
        <fullName evidence="1">Protein-beta-aspartate methyltransferase</fullName>
        <shortName evidence="1">PIMT</shortName>
    </alternativeName>
</protein>
<organism>
    <name type="scientific">Burkholderia pseudomallei (strain 1710b)</name>
    <dbReference type="NCBI Taxonomy" id="320372"/>
    <lineage>
        <taxon>Bacteria</taxon>
        <taxon>Pseudomonadati</taxon>
        <taxon>Pseudomonadota</taxon>
        <taxon>Betaproteobacteria</taxon>
        <taxon>Burkholderiales</taxon>
        <taxon>Burkholderiaceae</taxon>
        <taxon>Burkholderia</taxon>
        <taxon>pseudomallei group</taxon>
    </lineage>
</organism>
<feature type="chain" id="PRO_0000351836" description="Protein-L-isoaspartate O-methyltransferase">
    <location>
        <begin position="1"/>
        <end position="322"/>
    </location>
</feature>
<feature type="region of interest" description="Disordered" evidence="2">
    <location>
        <begin position="1"/>
        <end position="101"/>
    </location>
</feature>
<feature type="compositionally biased region" description="Basic and acidic residues" evidence="2">
    <location>
        <begin position="14"/>
        <end position="29"/>
    </location>
</feature>
<feature type="compositionally biased region" description="Low complexity" evidence="2">
    <location>
        <begin position="33"/>
        <end position="51"/>
    </location>
</feature>
<feature type="compositionally biased region" description="Low complexity" evidence="2">
    <location>
        <begin position="76"/>
        <end position="91"/>
    </location>
</feature>
<feature type="active site" evidence="1">
    <location>
        <position position="170"/>
    </location>
</feature>
<name>PIMT_BURP1</name>
<reference key="1">
    <citation type="journal article" date="2010" name="Genome Biol. Evol.">
        <title>Continuing evolution of Burkholderia mallei through genome reduction and large-scale rearrangements.</title>
        <authorList>
            <person name="Losada L."/>
            <person name="Ronning C.M."/>
            <person name="DeShazer D."/>
            <person name="Woods D."/>
            <person name="Fedorova N."/>
            <person name="Kim H.S."/>
            <person name="Shabalina S.A."/>
            <person name="Pearson T.R."/>
            <person name="Brinkac L."/>
            <person name="Tan P."/>
            <person name="Nandi T."/>
            <person name="Crabtree J."/>
            <person name="Badger J."/>
            <person name="Beckstrom-Sternberg S."/>
            <person name="Saqib M."/>
            <person name="Schutzer S.E."/>
            <person name="Keim P."/>
            <person name="Nierman W.C."/>
        </authorList>
    </citation>
    <scope>NUCLEOTIDE SEQUENCE [LARGE SCALE GENOMIC DNA]</scope>
    <source>
        <strain>1710b</strain>
    </source>
</reference>
<gene>
    <name evidence="1" type="primary">pcm</name>
    <name type="ordered locus">BURPS1710b_2367</name>
</gene>
<keyword id="KW-0963">Cytoplasm</keyword>
<keyword id="KW-0489">Methyltransferase</keyword>
<keyword id="KW-0949">S-adenosyl-L-methionine</keyword>
<keyword id="KW-0808">Transferase</keyword>
<evidence type="ECO:0000255" key="1">
    <source>
        <dbReference type="HAMAP-Rule" id="MF_00090"/>
    </source>
</evidence>
<evidence type="ECO:0000256" key="2">
    <source>
        <dbReference type="SAM" id="MobiDB-lite"/>
    </source>
</evidence>